<feature type="chain" id="PRO_1000055407" description="Large ribosomal subunit protein uL13">
    <location>
        <begin position="1"/>
        <end position="147"/>
    </location>
</feature>
<name>RL13_MYCA1</name>
<comment type="function">
    <text evidence="1">This protein is one of the early assembly proteins of the 50S ribosomal subunit, although it is not seen to bind rRNA by itself. It is important during the early stages of 50S assembly.</text>
</comment>
<comment type="subunit">
    <text evidence="1">Part of the 50S ribosomal subunit.</text>
</comment>
<comment type="similarity">
    <text evidence="1">Belongs to the universal ribosomal protein uL13 family.</text>
</comment>
<evidence type="ECO:0000255" key="1">
    <source>
        <dbReference type="HAMAP-Rule" id="MF_01366"/>
    </source>
</evidence>
<evidence type="ECO:0000305" key="2"/>
<accession>A0QKT3</accession>
<protein>
    <recommendedName>
        <fullName evidence="1">Large ribosomal subunit protein uL13</fullName>
    </recommendedName>
    <alternativeName>
        <fullName evidence="2">50S ribosomal protein L13</fullName>
    </alternativeName>
</protein>
<keyword id="KW-0687">Ribonucleoprotein</keyword>
<keyword id="KW-0689">Ribosomal protein</keyword>
<gene>
    <name evidence="1" type="primary">rplM</name>
    <name type="ordered locus">MAV_4386</name>
</gene>
<reference key="1">
    <citation type="submission" date="2006-10" db="EMBL/GenBank/DDBJ databases">
        <authorList>
            <person name="Fleischmann R.D."/>
            <person name="Dodson R.J."/>
            <person name="Haft D.H."/>
            <person name="Merkel J.S."/>
            <person name="Nelson W.C."/>
            <person name="Fraser C.M."/>
        </authorList>
    </citation>
    <scope>NUCLEOTIDE SEQUENCE [LARGE SCALE GENOMIC DNA]</scope>
    <source>
        <strain>104</strain>
    </source>
</reference>
<sequence>MPTYAPKAGDTTRSWYVIDATDVVLGRLAVAAANLLRGKHKPTFAPNVDGGDFVIVVNADKVAFSGQKLDKKLAYRHSGYPGGLRSRTIGELMQKHPDRVVADAIVGMLPKNKLSRQIQRKLRVYAGPEHPHTAQQPIPYEIKQVAQ</sequence>
<dbReference type="EMBL" id="CP000479">
    <property type="protein sequence ID" value="ABK68699.1"/>
    <property type="molecule type" value="Genomic_DNA"/>
</dbReference>
<dbReference type="RefSeq" id="WP_003873431.1">
    <property type="nucleotide sequence ID" value="NC_008595.1"/>
</dbReference>
<dbReference type="SMR" id="A0QKT3"/>
<dbReference type="GeneID" id="75271900"/>
<dbReference type="KEGG" id="mav:MAV_4386"/>
<dbReference type="HOGENOM" id="CLU_082184_2_2_11"/>
<dbReference type="Proteomes" id="UP000001574">
    <property type="component" value="Chromosome"/>
</dbReference>
<dbReference type="GO" id="GO:0022625">
    <property type="term" value="C:cytosolic large ribosomal subunit"/>
    <property type="evidence" value="ECO:0007669"/>
    <property type="project" value="TreeGrafter"/>
</dbReference>
<dbReference type="GO" id="GO:0003729">
    <property type="term" value="F:mRNA binding"/>
    <property type="evidence" value="ECO:0007669"/>
    <property type="project" value="TreeGrafter"/>
</dbReference>
<dbReference type="GO" id="GO:0003735">
    <property type="term" value="F:structural constituent of ribosome"/>
    <property type="evidence" value="ECO:0007669"/>
    <property type="project" value="InterPro"/>
</dbReference>
<dbReference type="GO" id="GO:0017148">
    <property type="term" value="P:negative regulation of translation"/>
    <property type="evidence" value="ECO:0007669"/>
    <property type="project" value="TreeGrafter"/>
</dbReference>
<dbReference type="GO" id="GO:0006412">
    <property type="term" value="P:translation"/>
    <property type="evidence" value="ECO:0007669"/>
    <property type="project" value="UniProtKB-UniRule"/>
</dbReference>
<dbReference type="CDD" id="cd00392">
    <property type="entry name" value="Ribosomal_L13"/>
    <property type="match status" value="1"/>
</dbReference>
<dbReference type="FunFam" id="3.90.1180.10:FF:000001">
    <property type="entry name" value="50S ribosomal protein L13"/>
    <property type="match status" value="1"/>
</dbReference>
<dbReference type="Gene3D" id="3.90.1180.10">
    <property type="entry name" value="Ribosomal protein L13"/>
    <property type="match status" value="1"/>
</dbReference>
<dbReference type="HAMAP" id="MF_01366">
    <property type="entry name" value="Ribosomal_uL13"/>
    <property type="match status" value="1"/>
</dbReference>
<dbReference type="InterPro" id="IPR005822">
    <property type="entry name" value="Ribosomal_uL13"/>
</dbReference>
<dbReference type="InterPro" id="IPR005823">
    <property type="entry name" value="Ribosomal_uL13_bac-type"/>
</dbReference>
<dbReference type="InterPro" id="IPR023563">
    <property type="entry name" value="Ribosomal_uL13_CS"/>
</dbReference>
<dbReference type="InterPro" id="IPR036899">
    <property type="entry name" value="Ribosomal_uL13_sf"/>
</dbReference>
<dbReference type="NCBIfam" id="TIGR01066">
    <property type="entry name" value="rplM_bact"/>
    <property type="match status" value="1"/>
</dbReference>
<dbReference type="PANTHER" id="PTHR11545:SF2">
    <property type="entry name" value="LARGE RIBOSOMAL SUBUNIT PROTEIN UL13M"/>
    <property type="match status" value="1"/>
</dbReference>
<dbReference type="PANTHER" id="PTHR11545">
    <property type="entry name" value="RIBOSOMAL PROTEIN L13"/>
    <property type="match status" value="1"/>
</dbReference>
<dbReference type="Pfam" id="PF00572">
    <property type="entry name" value="Ribosomal_L13"/>
    <property type="match status" value="1"/>
</dbReference>
<dbReference type="PIRSF" id="PIRSF002181">
    <property type="entry name" value="Ribosomal_L13"/>
    <property type="match status" value="1"/>
</dbReference>
<dbReference type="SUPFAM" id="SSF52161">
    <property type="entry name" value="Ribosomal protein L13"/>
    <property type="match status" value="1"/>
</dbReference>
<dbReference type="PROSITE" id="PS00783">
    <property type="entry name" value="RIBOSOMAL_L13"/>
    <property type="match status" value="1"/>
</dbReference>
<proteinExistence type="inferred from homology"/>
<organism>
    <name type="scientific">Mycobacterium avium (strain 104)</name>
    <dbReference type="NCBI Taxonomy" id="243243"/>
    <lineage>
        <taxon>Bacteria</taxon>
        <taxon>Bacillati</taxon>
        <taxon>Actinomycetota</taxon>
        <taxon>Actinomycetes</taxon>
        <taxon>Mycobacteriales</taxon>
        <taxon>Mycobacteriaceae</taxon>
        <taxon>Mycobacterium</taxon>
        <taxon>Mycobacterium avium complex (MAC)</taxon>
    </lineage>
</organism>